<dbReference type="EMBL" id="CP001127">
    <property type="protein sequence ID" value="ACF91649.1"/>
    <property type="molecule type" value="Genomic_DNA"/>
</dbReference>
<dbReference type="RefSeq" id="WP_001077322.1">
    <property type="nucleotide sequence ID" value="NC_011094.1"/>
</dbReference>
<dbReference type="SMR" id="B4TPS5"/>
<dbReference type="KEGG" id="sew:SeSA_A4278"/>
<dbReference type="HOGENOM" id="CLU_013430_3_0_6"/>
<dbReference type="Proteomes" id="UP000001865">
    <property type="component" value="Chromosome"/>
</dbReference>
<dbReference type="GO" id="GO:0005886">
    <property type="term" value="C:plasma membrane"/>
    <property type="evidence" value="ECO:0007669"/>
    <property type="project" value="UniProtKB-SubCell"/>
</dbReference>
<dbReference type="GO" id="GO:0015086">
    <property type="term" value="F:cadmium ion transmembrane transporter activity"/>
    <property type="evidence" value="ECO:0007669"/>
    <property type="project" value="UniProtKB-UniRule"/>
</dbReference>
<dbReference type="GO" id="GO:0015093">
    <property type="term" value="F:ferrous iron transmembrane transporter activity"/>
    <property type="evidence" value="ECO:0007669"/>
    <property type="project" value="TreeGrafter"/>
</dbReference>
<dbReference type="GO" id="GO:0046872">
    <property type="term" value="F:metal ion binding"/>
    <property type="evidence" value="ECO:0007669"/>
    <property type="project" value="UniProtKB-KW"/>
</dbReference>
<dbReference type="GO" id="GO:0015341">
    <property type="term" value="F:zinc efflux antiporter activity"/>
    <property type="evidence" value="ECO:0007669"/>
    <property type="project" value="TreeGrafter"/>
</dbReference>
<dbReference type="GO" id="GO:0006882">
    <property type="term" value="P:intracellular zinc ion homeostasis"/>
    <property type="evidence" value="ECO:0007669"/>
    <property type="project" value="TreeGrafter"/>
</dbReference>
<dbReference type="FunFam" id="1.20.1510.10:FF:000001">
    <property type="entry name" value="Ferrous-iron efflux pump FieF"/>
    <property type="match status" value="1"/>
</dbReference>
<dbReference type="FunFam" id="3.30.70.1350:FF:000002">
    <property type="entry name" value="Ferrous-iron efflux pump FieF"/>
    <property type="match status" value="1"/>
</dbReference>
<dbReference type="Gene3D" id="1.20.1510.10">
    <property type="entry name" value="Cation efflux protein transmembrane domain"/>
    <property type="match status" value="1"/>
</dbReference>
<dbReference type="Gene3D" id="3.30.70.1350">
    <property type="entry name" value="Cation efflux protein, cytoplasmic domain"/>
    <property type="match status" value="1"/>
</dbReference>
<dbReference type="HAMAP" id="MF_01425">
    <property type="entry name" value="Cation_efflux_FieF"/>
    <property type="match status" value="1"/>
</dbReference>
<dbReference type="InterPro" id="IPR002524">
    <property type="entry name" value="Cation_efflux"/>
</dbReference>
<dbReference type="InterPro" id="IPR027470">
    <property type="entry name" value="Cation_efflux_CTD"/>
</dbReference>
<dbReference type="InterPro" id="IPR036837">
    <property type="entry name" value="Cation_efflux_CTD_sf"/>
</dbReference>
<dbReference type="InterPro" id="IPR023783">
    <property type="entry name" value="Cation_efflux_FieF"/>
</dbReference>
<dbReference type="InterPro" id="IPR027469">
    <property type="entry name" value="Cation_efflux_TMD_sf"/>
</dbReference>
<dbReference type="InterPro" id="IPR050291">
    <property type="entry name" value="CDF_Transporter"/>
</dbReference>
<dbReference type="NCBIfam" id="TIGR01297">
    <property type="entry name" value="CDF"/>
    <property type="match status" value="1"/>
</dbReference>
<dbReference type="NCBIfam" id="NF007064">
    <property type="entry name" value="PRK09509.1"/>
    <property type="match status" value="1"/>
</dbReference>
<dbReference type="PANTHER" id="PTHR43840:SF41">
    <property type="entry name" value="CATION-EFFLUX PUMP FIEF"/>
    <property type="match status" value="1"/>
</dbReference>
<dbReference type="PANTHER" id="PTHR43840">
    <property type="entry name" value="MITOCHONDRIAL METAL TRANSPORTER 1-RELATED"/>
    <property type="match status" value="1"/>
</dbReference>
<dbReference type="Pfam" id="PF01545">
    <property type="entry name" value="Cation_efflux"/>
    <property type="match status" value="1"/>
</dbReference>
<dbReference type="Pfam" id="PF16916">
    <property type="entry name" value="ZT_dimer"/>
    <property type="match status" value="1"/>
</dbReference>
<dbReference type="SUPFAM" id="SSF160240">
    <property type="entry name" value="Cation efflux protein cytoplasmic domain-like"/>
    <property type="match status" value="1"/>
</dbReference>
<dbReference type="SUPFAM" id="SSF161111">
    <property type="entry name" value="Cation efflux protein transmembrane domain-like"/>
    <property type="match status" value="1"/>
</dbReference>
<organism>
    <name type="scientific">Salmonella schwarzengrund (strain CVM19633)</name>
    <dbReference type="NCBI Taxonomy" id="439843"/>
    <lineage>
        <taxon>Bacteria</taxon>
        <taxon>Pseudomonadati</taxon>
        <taxon>Pseudomonadota</taxon>
        <taxon>Gammaproteobacteria</taxon>
        <taxon>Enterobacterales</taxon>
        <taxon>Enterobacteriaceae</taxon>
        <taxon>Salmonella</taxon>
    </lineage>
</organism>
<name>FIEF_SALSV</name>
<comment type="function">
    <text evidence="1">Divalent metal cation transporter which exports Zn(2+), Cd(2+) and possibly Fe(2+). May be involved in zinc and iron detoxification by efflux.</text>
</comment>
<comment type="catalytic activity">
    <reaction evidence="1">
        <text>Zn(2+)(in) + H(+)(out) = Zn(2+)(out) + H(+)(in)</text>
        <dbReference type="Rhea" id="RHEA:28839"/>
        <dbReference type="ChEBI" id="CHEBI:15378"/>
        <dbReference type="ChEBI" id="CHEBI:29105"/>
    </reaction>
</comment>
<comment type="catalytic activity">
    <reaction evidence="1">
        <text>Cd(2+)(in) + H(+)(out) = Cd(2+)(out) + H(+)(in)</text>
        <dbReference type="Rhea" id="RHEA:28739"/>
        <dbReference type="ChEBI" id="CHEBI:15378"/>
        <dbReference type="ChEBI" id="CHEBI:48775"/>
    </reaction>
</comment>
<comment type="catalytic activity">
    <reaction evidence="1">
        <text>Fe(2+)(in) + H(+)(out) = Fe(2+)(out) + H(+)(in)</text>
        <dbReference type="Rhea" id="RHEA:29439"/>
        <dbReference type="ChEBI" id="CHEBI:15378"/>
        <dbReference type="ChEBI" id="CHEBI:29033"/>
    </reaction>
</comment>
<comment type="subunit">
    <text evidence="1">Homodimer.</text>
</comment>
<comment type="subcellular location">
    <subcellularLocation>
        <location evidence="1">Cell inner membrane</location>
        <topology evidence="1">Multi-pass membrane protein</topology>
    </subcellularLocation>
</comment>
<comment type="similarity">
    <text evidence="1">Belongs to the cation diffusion facilitator (CDF) transporter (TC 2.A.4) family. FieF subfamily.</text>
</comment>
<gene>
    <name evidence="1" type="primary">fieF</name>
    <name type="ordered locus">SeSA_A4278</name>
</gene>
<feature type="chain" id="PRO_1000145706" description="Cation-efflux pump FieF">
    <location>
        <begin position="1"/>
        <end position="300"/>
    </location>
</feature>
<feature type="transmembrane region" description="Helical" evidence="1">
    <location>
        <begin position="24"/>
        <end position="44"/>
    </location>
</feature>
<feature type="transmembrane region" description="Helical" evidence="1">
    <location>
        <begin position="82"/>
        <end position="102"/>
    </location>
</feature>
<feature type="transmembrane region" description="Helical" evidence="1">
    <location>
        <begin position="114"/>
        <end position="134"/>
    </location>
</feature>
<feature type="transmembrane region" description="Helical" evidence="1">
    <location>
        <begin position="156"/>
        <end position="176"/>
    </location>
</feature>
<feature type="transmembrane region" description="Helical" evidence="1">
    <location>
        <begin position="178"/>
        <end position="198"/>
    </location>
</feature>
<feature type="binding site" evidence="1">
    <location>
        <position position="45"/>
    </location>
    <ligand>
        <name>Zn(2+)</name>
        <dbReference type="ChEBI" id="CHEBI:29105"/>
    </ligand>
</feature>
<feature type="binding site" evidence="1">
    <location>
        <position position="49"/>
    </location>
    <ligand>
        <name>Zn(2+)</name>
        <dbReference type="ChEBI" id="CHEBI:29105"/>
    </ligand>
</feature>
<feature type="binding site" evidence="1">
    <location>
        <position position="153"/>
    </location>
    <ligand>
        <name>Zn(2+)</name>
        <dbReference type="ChEBI" id="CHEBI:29105"/>
    </ligand>
</feature>
<feature type="binding site" evidence="1">
    <location>
        <position position="157"/>
    </location>
    <ligand>
        <name>Zn(2+)</name>
        <dbReference type="ChEBI" id="CHEBI:29105"/>
    </ligand>
</feature>
<proteinExistence type="inferred from homology"/>
<accession>B4TPS5</accession>
<keyword id="KW-0997">Cell inner membrane</keyword>
<keyword id="KW-1003">Cell membrane</keyword>
<keyword id="KW-0406">Ion transport</keyword>
<keyword id="KW-0408">Iron</keyword>
<keyword id="KW-0410">Iron transport</keyword>
<keyword id="KW-0472">Membrane</keyword>
<keyword id="KW-0479">Metal-binding</keyword>
<keyword id="KW-0812">Transmembrane</keyword>
<keyword id="KW-1133">Transmembrane helix</keyword>
<keyword id="KW-0813">Transport</keyword>
<keyword id="KW-0862">Zinc</keyword>
<keyword id="KW-0864">Zinc transport</keyword>
<protein>
    <recommendedName>
        <fullName evidence="1">Cation-efflux pump FieF</fullName>
    </recommendedName>
</protein>
<evidence type="ECO:0000255" key="1">
    <source>
        <dbReference type="HAMAP-Rule" id="MF_01425"/>
    </source>
</evidence>
<reference key="1">
    <citation type="journal article" date="2011" name="J. Bacteriol.">
        <title>Comparative genomics of 28 Salmonella enterica isolates: evidence for CRISPR-mediated adaptive sublineage evolution.</title>
        <authorList>
            <person name="Fricke W.F."/>
            <person name="Mammel M.K."/>
            <person name="McDermott P.F."/>
            <person name="Tartera C."/>
            <person name="White D.G."/>
            <person name="Leclerc J.E."/>
            <person name="Ravel J."/>
            <person name="Cebula T.A."/>
        </authorList>
    </citation>
    <scope>NUCLEOTIDE SEQUENCE [LARGE SCALE GENOMIC DNA]</scope>
    <source>
        <strain>CVM19633</strain>
    </source>
</reference>
<sequence length="300" mass="32899">MNQTYGRLVSRAAIAATAMASALLLIKIFAWWYTGSVSILAALVDSLVDIAASLTNLLVVRYSLQPADDEHTFGHGKAESLAALAQSMFISGSALFLFLTSIQNLIKPTPMNDPGVGIGVTVIALICTIILVTFQRWVVRKTQSQAVRADMLHYQSDVMMNGAILIALGLSWYGWHRADALFALGIGIYILYSALRMGYEAVQSLLDRALPDAERQEIIDIVTSWPGVSGAHDLRTRQSGPTRFIQIHLEMEDNLPLVQAHLVAEQVEQAILRRFPGSDVIIHQDPCSVVPTEGKKFELV</sequence>